<dbReference type="EC" id="3.4.24.-" evidence="1"/>
<dbReference type="EMBL" id="CP001080">
    <property type="protein sequence ID" value="ACD66518.1"/>
    <property type="molecule type" value="Genomic_DNA"/>
</dbReference>
<dbReference type="RefSeq" id="WP_012459592.1">
    <property type="nucleotide sequence ID" value="NC_010730.1"/>
</dbReference>
<dbReference type="SMR" id="B2V995"/>
<dbReference type="STRING" id="436114.SYO3AOP1_0890"/>
<dbReference type="KEGG" id="sul:SYO3AOP1_0890"/>
<dbReference type="eggNOG" id="COG0501">
    <property type="taxonomic scope" value="Bacteria"/>
</dbReference>
<dbReference type="HOGENOM" id="CLU_042266_3_0_0"/>
<dbReference type="GO" id="GO:0005886">
    <property type="term" value="C:plasma membrane"/>
    <property type="evidence" value="ECO:0007669"/>
    <property type="project" value="UniProtKB-SubCell"/>
</dbReference>
<dbReference type="GO" id="GO:0004222">
    <property type="term" value="F:metalloendopeptidase activity"/>
    <property type="evidence" value="ECO:0007669"/>
    <property type="project" value="UniProtKB-UniRule"/>
</dbReference>
<dbReference type="GO" id="GO:0008270">
    <property type="term" value="F:zinc ion binding"/>
    <property type="evidence" value="ECO:0007669"/>
    <property type="project" value="UniProtKB-UniRule"/>
</dbReference>
<dbReference type="GO" id="GO:0006508">
    <property type="term" value="P:proteolysis"/>
    <property type="evidence" value="ECO:0007669"/>
    <property type="project" value="UniProtKB-KW"/>
</dbReference>
<dbReference type="CDD" id="cd07336">
    <property type="entry name" value="M48B_HtpX_like"/>
    <property type="match status" value="1"/>
</dbReference>
<dbReference type="Gene3D" id="3.30.2010.10">
    <property type="entry name" value="Metalloproteases ('zincins'), catalytic domain"/>
    <property type="match status" value="1"/>
</dbReference>
<dbReference type="HAMAP" id="MF_00188">
    <property type="entry name" value="Pept_M48_protease_HtpX"/>
    <property type="match status" value="1"/>
</dbReference>
<dbReference type="InterPro" id="IPR050083">
    <property type="entry name" value="HtpX_protease"/>
</dbReference>
<dbReference type="InterPro" id="IPR022919">
    <property type="entry name" value="Pept_M48_protease_HtpX"/>
</dbReference>
<dbReference type="InterPro" id="IPR001915">
    <property type="entry name" value="Peptidase_M48"/>
</dbReference>
<dbReference type="NCBIfam" id="NF002826">
    <property type="entry name" value="PRK03001.1"/>
    <property type="match status" value="1"/>
</dbReference>
<dbReference type="PANTHER" id="PTHR43221">
    <property type="entry name" value="PROTEASE HTPX"/>
    <property type="match status" value="1"/>
</dbReference>
<dbReference type="PANTHER" id="PTHR43221:SF1">
    <property type="entry name" value="PROTEASE HTPX"/>
    <property type="match status" value="1"/>
</dbReference>
<dbReference type="Pfam" id="PF01435">
    <property type="entry name" value="Peptidase_M48"/>
    <property type="match status" value="1"/>
</dbReference>
<feature type="chain" id="PRO_1000118576" description="Protease HtpX homolog">
    <location>
        <begin position="1"/>
        <end position="296"/>
    </location>
</feature>
<feature type="transmembrane region" description="Helical" evidence="1">
    <location>
        <begin position="7"/>
        <end position="27"/>
    </location>
</feature>
<feature type="transmembrane region" description="Helical" evidence="1">
    <location>
        <begin position="29"/>
        <end position="49"/>
    </location>
</feature>
<feature type="transmembrane region" description="Helical" evidence="1">
    <location>
        <begin position="141"/>
        <end position="161"/>
    </location>
</feature>
<feature type="transmembrane region" description="Helical" evidence="1">
    <location>
        <begin position="178"/>
        <end position="198"/>
    </location>
</feature>
<feature type="active site" evidence="1">
    <location>
        <position position="132"/>
    </location>
</feature>
<feature type="binding site" evidence="1">
    <location>
        <position position="131"/>
    </location>
    <ligand>
        <name>Zn(2+)</name>
        <dbReference type="ChEBI" id="CHEBI:29105"/>
        <note>catalytic</note>
    </ligand>
</feature>
<feature type="binding site" evidence="1">
    <location>
        <position position="135"/>
    </location>
    <ligand>
        <name>Zn(2+)</name>
        <dbReference type="ChEBI" id="CHEBI:29105"/>
        <note>catalytic</note>
    </ligand>
</feature>
<feature type="binding site" evidence="1">
    <location>
        <position position="207"/>
    </location>
    <ligand>
        <name>Zn(2+)</name>
        <dbReference type="ChEBI" id="CHEBI:29105"/>
        <note>catalytic</note>
    </ligand>
</feature>
<proteinExistence type="inferred from homology"/>
<keyword id="KW-0997">Cell inner membrane</keyword>
<keyword id="KW-1003">Cell membrane</keyword>
<keyword id="KW-0378">Hydrolase</keyword>
<keyword id="KW-0472">Membrane</keyword>
<keyword id="KW-0479">Metal-binding</keyword>
<keyword id="KW-0482">Metalloprotease</keyword>
<keyword id="KW-0645">Protease</keyword>
<keyword id="KW-0812">Transmembrane</keyword>
<keyword id="KW-1133">Transmembrane helix</keyword>
<keyword id="KW-0862">Zinc</keyword>
<comment type="cofactor">
    <cofactor evidence="1">
        <name>Zn(2+)</name>
        <dbReference type="ChEBI" id="CHEBI:29105"/>
    </cofactor>
    <text evidence="1">Binds 1 zinc ion per subunit.</text>
</comment>
<comment type="subcellular location">
    <subcellularLocation>
        <location evidence="1">Cell inner membrane</location>
        <topology evidence="1">Multi-pass membrane protein</topology>
    </subcellularLocation>
</comment>
<comment type="similarity">
    <text evidence="1">Belongs to the peptidase M48B family.</text>
</comment>
<accession>B2V995</accession>
<sequence>MANQLKTVLLLGVLTGLFLAIGHLVAGKQGMIIAFVVALFMNFFSYFFSDKVALAMYGAREIMYEEAPWLHEMVEDLAKRAGIPKPKIYLAPIAVPNAFATGRDPNHAAVAVTSGILQILDKDELRGVLAHELGHVKNRDILISSIAATIGGAISMLANMAYYTAFLGGNDRENNNPIASIIGSIILFIVAPLAATLIQMAISRSREFVADEAGAKISGCPLCLANALRRLEEIAHNPQIQEIASQEINPGTAHMMIVNPLSGDFIMKLFSTHPPTEERIRRLEELARKMQPGYGF</sequence>
<name>HTPX_SULSY</name>
<organism>
    <name type="scientific">Sulfurihydrogenibium sp. (strain YO3AOP1)</name>
    <dbReference type="NCBI Taxonomy" id="436114"/>
    <lineage>
        <taxon>Bacteria</taxon>
        <taxon>Pseudomonadati</taxon>
        <taxon>Aquificota</taxon>
        <taxon>Aquificia</taxon>
        <taxon>Aquificales</taxon>
        <taxon>Hydrogenothermaceae</taxon>
        <taxon>Sulfurihydrogenibium</taxon>
    </lineage>
</organism>
<gene>
    <name evidence="1" type="primary">htpX</name>
    <name type="ordered locus">SYO3AOP1_0890</name>
</gene>
<evidence type="ECO:0000255" key="1">
    <source>
        <dbReference type="HAMAP-Rule" id="MF_00188"/>
    </source>
</evidence>
<protein>
    <recommendedName>
        <fullName evidence="1">Protease HtpX homolog</fullName>
        <ecNumber evidence="1">3.4.24.-</ecNumber>
    </recommendedName>
</protein>
<reference key="1">
    <citation type="journal article" date="2009" name="J. Bacteriol.">
        <title>Complete and draft genome sequences of six members of the Aquificales.</title>
        <authorList>
            <person name="Reysenbach A.-L."/>
            <person name="Hamamura N."/>
            <person name="Podar M."/>
            <person name="Griffiths E."/>
            <person name="Ferreira S."/>
            <person name="Hochstein R."/>
            <person name="Heidelberg J."/>
            <person name="Johnson J."/>
            <person name="Mead D."/>
            <person name="Pohorille A."/>
            <person name="Sarmiento M."/>
            <person name="Schweighofer K."/>
            <person name="Seshadri R."/>
            <person name="Voytek M.A."/>
        </authorList>
    </citation>
    <scope>NUCLEOTIDE SEQUENCE [LARGE SCALE GENOMIC DNA]</scope>
    <source>
        <strain>YO3AOP1</strain>
    </source>
</reference>